<proteinExistence type="evidence at protein level"/>
<feature type="chain" id="PRO_0000087405" description="G0/G1 switch protein 2">
    <location>
        <begin position="1"/>
        <end position="103"/>
    </location>
</feature>
<feature type="region of interest" description="Disordered" evidence="1">
    <location>
        <begin position="80"/>
        <end position="103"/>
    </location>
</feature>
<feature type="mutagenesis site" description="No effect on BCL2-binding; when associated with A-36." evidence="2">
    <original>L</original>
    <variation>A</variation>
    <location>
        <position position="35"/>
    </location>
</feature>
<feature type="mutagenesis site" description="No effect on BCL2-binding; when associated with A-35." evidence="2">
    <original>F</original>
    <variation>A</variation>
    <location>
        <position position="36"/>
    </location>
</feature>
<feature type="mutagenesis site" description="No effect on BCL2-binding; when associated with A-39." evidence="2">
    <original>V</original>
    <variation>A</variation>
    <location>
        <position position="38"/>
    </location>
</feature>
<feature type="mutagenesis site" description="No effect on BCL2-binding; when associated with A-38." evidence="2">
    <original>V</original>
    <variation>A</variation>
    <location>
        <position position="39"/>
    </location>
</feature>
<feature type="mutagenesis site" description="No effect on BCL2-binding; when associated with A-44." evidence="2">
    <original>M</original>
    <variation>A</variation>
    <location>
        <position position="43"/>
    </location>
</feature>
<feature type="mutagenesis site" description="No effect on BCL2-binding; when associated with A-43." evidence="2">
    <original>E</original>
    <variation>A</variation>
    <location>
        <position position="44"/>
    </location>
</feature>
<feature type="mutagenesis site" description="No effect on BCL2-binding; when associated with A-46." evidence="2">
    <original>T</original>
    <variation>A</variation>
    <location>
        <position position="45"/>
    </location>
</feature>
<feature type="mutagenesis site" description="No effect on BCL2-binding; when associated with A-45." evidence="2">
    <original>V</original>
    <variation>A</variation>
    <location>
        <position position="46"/>
    </location>
</feature>
<feature type="mutagenesis site" description="Reduced BCL2-binding; when associated with A-51." evidence="2">
    <original>F</original>
    <variation>A</variation>
    <location>
        <position position="50"/>
    </location>
</feature>
<feature type="mutagenesis site" description="Reduced BCL2-binding; when associated with A-50." evidence="2">
    <original>T</original>
    <variation>A</variation>
    <location>
        <position position="51"/>
    </location>
</feature>
<feature type="mutagenesis site" description="Reduced BCL2-binding; when associated with A-55." evidence="2">
    <original>R</original>
    <variation>A</variation>
    <location>
        <position position="54"/>
    </location>
</feature>
<feature type="mutagenesis site" description="Reduced BCL2-binding; when associated with A-54." evidence="2">
    <original>R</original>
    <variation>A</variation>
    <location>
        <position position="55"/>
    </location>
</feature>
<feature type="mutagenesis site" description="Reduced BCL2-binding and reduced pro-apoptotic activity; when associated with A-58. No effect on mitochondrial localization; when associated with A-58." evidence="2">
    <original>R</original>
    <variation>A</variation>
    <location>
        <position position="57"/>
    </location>
</feature>
<feature type="mutagenesis site" description="Reduced BCL2-binding and reduced pro-apoptotic activity; when associated with A-57. No effect on mitochondrial localization; when associated with A-57." evidence="2">
    <original>D</original>
    <variation>A</variation>
    <location>
        <position position="58"/>
    </location>
</feature>
<protein>
    <recommendedName>
        <fullName>G0/G1 switch protein 2</fullName>
    </recommendedName>
    <alternativeName>
        <fullName>G0/G1 switch regulatory protein 2</fullName>
    </alternativeName>
    <alternativeName>
        <fullName>Putative lymphocyte G0/G1 switch gene</fullName>
    </alternativeName>
</protein>
<sequence length="103" mass="11321">METVQELIPLAKEMMAQKRKGKMVKLYVLGSVLALFGVVLGLMETVCSPFTAARRLRDQEAAVAELQAALERQALQKQALQEKGKQQDTVLGGRALSNRQHAS</sequence>
<keyword id="KW-0053">Apoptosis</keyword>
<keyword id="KW-0496">Mitochondrion</keyword>
<keyword id="KW-1267">Proteomics identification</keyword>
<keyword id="KW-1185">Reference proteome</keyword>
<name>G0S2_HUMAN</name>
<accession>P27469</accession>
<accession>Q6FGC8</accession>
<gene>
    <name type="primary">G0S2</name>
</gene>
<reference key="1">
    <citation type="journal article" date="1991" name="DNA Cell Biol.">
        <title>A human putative lymphocyte G0/G1 switch gene containing a CpG-rich island encodes a small basic protein with the potential to be phosphorylated.</title>
        <authorList>
            <person name="Russell L."/>
            <person name="Forsdyke D.R."/>
        </authorList>
    </citation>
    <scope>NUCLEOTIDE SEQUENCE [GENOMIC DNA]</scope>
</reference>
<reference key="2">
    <citation type="submission" date="2003-05" db="EMBL/GenBank/DDBJ databases">
        <title>Cloning of human full-length CDSs in BD Creator(TM) system donor vector.</title>
        <authorList>
            <person name="Kalnine N."/>
            <person name="Chen X."/>
            <person name="Rolfs A."/>
            <person name="Halleck A."/>
            <person name="Hines L."/>
            <person name="Eisenstein S."/>
            <person name="Koundinya M."/>
            <person name="Raphael J."/>
            <person name="Moreira D."/>
            <person name="Kelley T."/>
            <person name="LaBaer J."/>
            <person name="Lin Y."/>
            <person name="Phelan M."/>
            <person name="Farmer A."/>
        </authorList>
    </citation>
    <scope>NUCLEOTIDE SEQUENCE [LARGE SCALE MRNA]</scope>
</reference>
<reference key="3">
    <citation type="submission" date="2004-06" db="EMBL/GenBank/DDBJ databases">
        <title>Cloning of human full open reading frames in Gateway(TM) system entry vector (pDONR201).</title>
        <authorList>
            <person name="Halleck A."/>
            <person name="Ebert L."/>
            <person name="Mkoundinya M."/>
            <person name="Schick M."/>
            <person name="Eisenstein S."/>
            <person name="Neubert P."/>
            <person name="Kstrang K."/>
            <person name="Schatten R."/>
            <person name="Shen B."/>
            <person name="Henze S."/>
            <person name="Mar W."/>
            <person name="Korn B."/>
            <person name="Zuo D."/>
            <person name="Hu Y."/>
            <person name="LaBaer J."/>
        </authorList>
    </citation>
    <scope>NUCLEOTIDE SEQUENCE [LARGE SCALE MRNA]</scope>
</reference>
<reference key="4">
    <citation type="journal article" date="2006" name="Nature">
        <title>The DNA sequence and biological annotation of human chromosome 1.</title>
        <authorList>
            <person name="Gregory S.G."/>
            <person name="Barlow K.F."/>
            <person name="McLay K.E."/>
            <person name="Kaul R."/>
            <person name="Swarbreck D."/>
            <person name="Dunham A."/>
            <person name="Scott C.E."/>
            <person name="Howe K.L."/>
            <person name="Woodfine K."/>
            <person name="Spencer C.C.A."/>
            <person name="Jones M.C."/>
            <person name="Gillson C."/>
            <person name="Searle S."/>
            <person name="Zhou Y."/>
            <person name="Kokocinski F."/>
            <person name="McDonald L."/>
            <person name="Evans R."/>
            <person name="Phillips K."/>
            <person name="Atkinson A."/>
            <person name="Cooper R."/>
            <person name="Jones C."/>
            <person name="Hall R.E."/>
            <person name="Andrews T.D."/>
            <person name="Lloyd C."/>
            <person name="Ainscough R."/>
            <person name="Almeida J.P."/>
            <person name="Ambrose K.D."/>
            <person name="Anderson F."/>
            <person name="Andrew R.W."/>
            <person name="Ashwell R.I.S."/>
            <person name="Aubin K."/>
            <person name="Babbage A.K."/>
            <person name="Bagguley C.L."/>
            <person name="Bailey J."/>
            <person name="Beasley H."/>
            <person name="Bethel G."/>
            <person name="Bird C.P."/>
            <person name="Bray-Allen S."/>
            <person name="Brown J.Y."/>
            <person name="Brown A.J."/>
            <person name="Buckley D."/>
            <person name="Burton J."/>
            <person name="Bye J."/>
            <person name="Carder C."/>
            <person name="Chapman J.C."/>
            <person name="Clark S.Y."/>
            <person name="Clarke G."/>
            <person name="Clee C."/>
            <person name="Cobley V."/>
            <person name="Collier R.E."/>
            <person name="Corby N."/>
            <person name="Coville G.J."/>
            <person name="Davies J."/>
            <person name="Deadman R."/>
            <person name="Dunn M."/>
            <person name="Earthrowl M."/>
            <person name="Ellington A.G."/>
            <person name="Errington H."/>
            <person name="Frankish A."/>
            <person name="Frankland J."/>
            <person name="French L."/>
            <person name="Garner P."/>
            <person name="Garnett J."/>
            <person name="Gay L."/>
            <person name="Ghori M.R.J."/>
            <person name="Gibson R."/>
            <person name="Gilby L.M."/>
            <person name="Gillett W."/>
            <person name="Glithero R.J."/>
            <person name="Grafham D.V."/>
            <person name="Griffiths C."/>
            <person name="Griffiths-Jones S."/>
            <person name="Grocock R."/>
            <person name="Hammond S."/>
            <person name="Harrison E.S.I."/>
            <person name="Hart E."/>
            <person name="Haugen E."/>
            <person name="Heath P.D."/>
            <person name="Holmes S."/>
            <person name="Holt K."/>
            <person name="Howden P.J."/>
            <person name="Hunt A.R."/>
            <person name="Hunt S.E."/>
            <person name="Hunter G."/>
            <person name="Isherwood J."/>
            <person name="James R."/>
            <person name="Johnson C."/>
            <person name="Johnson D."/>
            <person name="Joy A."/>
            <person name="Kay M."/>
            <person name="Kershaw J.K."/>
            <person name="Kibukawa M."/>
            <person name="Kimberley A.M."/>
            <person name="King A."/>
            <person name="Knights A.J."/>
            <person name="Lad H."/>
            <person name="Laird G."/>
            <person name="Lawlor S."/>
            <person name="Leongamornlert D.A."/>
            <person name="Lloyd D.M."/>
            <person name="Loveland J."/>
            <person name="Lovell J."/>
            <person name="Lush M.J."/>
            <person name="Lyne R."/>
            <person name="Martin S."/>
            <person name="Mashreghi-Mohammadi M."/>
            <person name="Matthews L."/>
            <person name="Matthews N.S.W."/>
            <person name="McLaren S."/>
            <person name="Milne S."/>
            <person name="Mistry S."/>
            <person name="Moore M.J.F."/>
            <person name="Nickerson T."/>
            <person name="O'Dell C.N."/>
            <person name="Oliver K."/>
            <person name="Palmeiri A."/>
            <person name="Palmer S.A."/>
            <person name="Parker A."/>
            <person name="Patel D."/>
            <person name="Pearce A.V."/>
            <person name="Peck A.I."/>
            <person name="Pelan S."/>
            <person name="Phelps K."/>
            <person name="Phillimore B.J."/>
            <person name="Plumb R."/>
            <person name="Rajan J."/>
            <person name="Raymond C."/>
            <person name="Rouse G."/>
            <person name="Saenphimmachak C."/>
            <person name="Sehra H.K."/>
            <person name="Sheridan E."/>
            <person name="Shownkeen R."/>
            <person name="Sims S."/>
            <person name="Skuce C.D."/>
            <person name="Smith M."/>
            <person name="Steward C."/>
            <person name="Subramanian S."/>
            <person name="Sycamore N."/>
            <person name="Tracey A."/>
            <person name="Tromans A."/>
            <person name="Van Helmond Z."/>
            <person name="Wall M."/>
            <person name="Wallis J.M."/>
            <person name="White S."/>
            <person name="Whitehead S.L."/>
            <person name="Wilkinson J.E."/>
            <person name="Willey D.L."/>
            <person name="Williams H."/>
            <person name="Wilming L."/>
            <person name="Wray P.W."/>
            <person name="Wu Z."/>
            <person name="Coulson A."/>
            <person name="Vaudin M."/>
            <person name="Sulston J.E."/>
            <person name="Durbin R.M."/>
            <person name="Hubbard T."/>
            <person name="Wooster R."/>
            <person name="Dunham I."/>
            <person name="Carter N.P."/>
            <person name="McVean G."/>
            <person name="Ross M.T."/>
            <person name="Harrow J."/>
            <person name="Olson M.V."/>
            <person name="Beck S."/>
            <person name="Rogers J."/>
            <person name="Bentley D.R."/>
        </authorList>
    </citation>
    <scope>NUCLEOTIDE SEQUENCE [LARGE SCALE GENOMIC DNA]</scope>
</reference>
<reference key="5">
    <citation type="submission" date="2005-09" db="EMBL/GenBank/DDBJ databases">
        <authorList>
            <person name="Mural R.J."/>
            <person name="Istrail S."/>
            <person name="Sutton G.G."/>
            <person name="Florea L."/>
            <person name="Halpern A.L."/>
            <person name="Mobarry C.M."/>
            <person name="Lippert R."/>
            <person name="Walenz B."/>
            <person name="Shatkay H."/>
            <person name="Dew I."/>
            <person name="Miller J.R."/>
            <person name="Flanigan M.J."/>
            <person name="Edwards N.J."/>
            <person name="Bolanos R."/>
            <person name="Fasulo D."/>
            <person name="Halldorsson B.V."/>
            <person name="Hannenhalli S."/>
            <person name="Turner R."/>
            <person name="Yooseph S."/>
            <person name="Lu F."/>
            <person name="Nusskern D.R."/>
            <person name="Shue B.C."/>
            <person name="Zheng X.H."/>
            <person name="Zhong F."/>
            <person name="Delcher A.L."/>
            <person name="Huson D.H."/>
            <person name="Kravitz S.A."/>
            <person name="Mouchard L."/>
            <person name="Reinert K."/>
            <person name="Remington K.A."/>
            <person name="Clark A.G."/>
            <person name="Waterman M.S."/>
            <person name="Eichler E.E."/>
            <person name="Adams M.D."/>
            <person name="Hunkapiller M.W."/>
            <person name="Myers E.W."/>
            <person name="Venter J.C."/>
        </authorList>
    </citation>
    <scope>NUCLEOTIDE SEQUENCE [LARGE SCALE GENOMIC DNA]</scope>
</reference>
<reference key="6">
    <citation type="journal article" date="2004" name="Genome Res.">
        <title>The status, quality, and expansion of the NIH full-length cDNA project: the Mammalian Gene Collection (MGC).</title>
        <authorList>
            <consortium name="The MGC Project Team"/>
        </authorList>
    </citation>
    <scope>NUCLEOTIDE SEQUENCE [LARGE SCALE MRNA]</scope>
    <source>
        <tissue>Lung</tissue>
    </source>
</reference>
<reference key="7">
    <citation type="journal article" date="2009" name="Cancer Res.">
        <title>Identification of a protein, G0S2, that lacks Bcl-2 homology domains and interacts with and antagonizes Bcl-2.</title>
        <authorList>
            <person name="Welch C."/>
            <person name="Santra M.K."/>
            <person name="El-Assaad W."/>
            <person name="Zhu X."/>
            <person name="Huber W.E."/>
            <person name="Keys R.A."/>
            <person name="Teodoro J.G."/>
            <person name="Green M.R."/>
        </authorList>
    </citation>
    <scope>FUNCTION</scope>
    <scope>INTERACTION WITH BCL2</scope>
    <scope>SUBCELLULAR LOCATION</scope>
    <scope>TISSUE SPECIFICITY</scope>
    <scope>INDUCTION</scope>
    <scope>MUTAGENESIS OF LEU-35; PHE-36; VAL-38; VAL-39; MET-43; GLU-44; THR-45; VAL-46; PHE-50; THR-51; ARG-54; ARG-55; ARG-57 AND ASP-58</scope>
</reference>
<comment type="function">
    <text evidence="2">Promotes apoptosis by binding to BCL2, hence preventing the formation of protective BCL2-BAX heterodimers.</text>
</comment>
<comment type="subunit">
    <text evidence="2">Directly interacts with BCL2; this interaction prevents the formation of the anti-apoptotic BAX-BCL2 complex.</text>
</comment>
<comment type="interaction">
    <interactant intactId="EBI-3939849">
        <id>P27469</id>
    </interactant>
    <interactant intactId="EBI-78035">
        <id>Q07817</id>
        <label>BCL2L1</label>
    </interactant>
    <organismsDiffer>false</organismsDiffer>
    <experiments>3</experiments>
</comment>
<comment type="interaction">
    <interactant intactId="EBI-3939849">
        <id>P27469</id>
    </interactant>
    <interactant intactId="EBI-707714">
        <id>Q92843</id>
        <label>BCL2L2</label>
    </interactant>
    <organismsDiffer>false</organismsDiffer>
    <experiments>3</experiments>
</comment>
<comment type="subcellular location">
    <subcellularLocation>
        <location evidence="2">Mitochondrion</location>
    </subcellularLocation>
</comment>
<comment type="tissue specificity">
    <text evidence="2">Widely expressed with highest levels in peripheral blood, skeletal muscle and heart, followed by kidney and liver.</text>
</comment>
<comment type="induction">
    <text evidence="2">Induced by TNF through the activation of the NFKB pathway.</text>
</comment>
<evidence type="ECO:0000256" key="1">
    <source>
        <dbReference type="SAM" id="MobiDB-lite"/>
    </source>
</evidence>
<evidence type="ECO:0000269" key="2">
    <source>
    </source>
</evidence>
<organism>
    <name type="scientific">Homo sapiens</name>
    <name type="common">Human</name>
    <dbReference type="NCBI Taxonomy" id="9606"/>
    <lineage>
        <taxon>Eukaryota</taxon>
        <taxon>Metazoa</taxon>
        <taxon>Chordata</taxon>
        <taxon>Craniata</taxon>
        <taxon>Vertebrata</taxon>
        <taxon>Euteleostomi</taxon>
        <taxon>Mammalia</taxon>
        <taxon>Eutheria</taxon>
        <taxon>Euarchontoglires</taxon>
        <taxon>Primates</taxon>
        <taxon>Haplorrhini</taxon>
        <taxon>Catarrhini</taxon>
        <taxon>Hominidae</taxon>
        <taxon>Homo</taxon>
    </lineage>
</organism>
<dbReference type="EMBL" id="M72885">
    <property type="protein sequence ID" value="AAA58966.1"/>
    <property type="molecule type" value="Genomic_DNA"/>
</dbReference>
<dbReference type="EMBL" id="M69199">
    <property type="protein sequence ID" value="AAB04044.1"/>
    <property type="molecule type" value="Genomic_DNA"/>
</dbReference>
<dbReference type="EMBL" id="BT007101">
    <property type="protein sequence ID" value="AAP35765.1"/>
    <property type="molecule type" value="mRNA"/>
</dbReference>
<dbReference type="EMBL" id="CR542179">
    <property type="protein sequence ID" value="CAG46976.1"/>
    <property type="molecule type" value="mRNA"/>
</dbReference>
<dbReference type="EMBL" id="CR542193">
    <property type="protein sequence ID" value="CAG46990.1"/>
    <property type="molecule type" value="mRNA"/>
</dbReference>
<dbReference type="EMBL" id="AL031316">
    <property type="status" value="NOT_ANNOTATED_CDS"/>
    <property type="molecule type" value="Genomic_DNA"/>
</dbReference>
<dbReference type="EMBL" id="CH471100">
    <property type="protein sequence ID" value="EAW93447.1"/>
    <property type="molecule type" value="Genomic_DNA"/>
</dbReference>
<dbReference type="EMBL" id="BC009694">
    <property type="protein sequence ID" value="AAH09694.1"/>
    <property type="molecule type" value="mRNA"/>
</dbReference>
<dbReference type="CCDS" id="CCDS1488.1"/>
<dbReference type="PIR" id="B40409">
    <property type="entry name" value="A40409"/>
</dbReference>
<dbReference type="RefSeq" id="NP_056529.1">
    <property type="nucleotide sequence ID" value="NM_015714.4"/>
</dbReference>
<dbReference type="BioGRID" id="119073">
    <property type="interactions" value="22"/>
</dbReference>
<dbReference type="FunCoup" id="P27469">
    <property type="interactions" value="137"/>
</dbReference>
<dbReference type="IntAct" id="P27469">
    <property type="interactions" value="18"/>
</dbReference>
<dbReference type="STRING" id="9606.ENSP00000355996"/>
<dbReference type="PhosphoSitePlus" id="P27469"/>
<dbReference type="BioMuta" id="G0S2"/>
<dbReference type="DMDM" id="120624"/>
<dbReference type="jPOST" id="P27469"/>
<dbReference type="MassIVE" id="P27469"/>
<dbReference type="PaxDb" id="9606-ENSP00000355996"/>
<dbReference type="PeptideAtlas" id="P27469"/>
<dbReference type="ProteomicsDB" id="54394"/>
<dbReference type="Pumba" id="P27469"/>
<dbReference type="Antibodypedia" id="2397">
    <property type="antibodies" value="139 antibodies from 25 providers"/>
</dbReference>
<dbReference type="DNASU" id="50486"/>
<dbReference type="Ensembl" id="ENST00000367029.5">
    <property type="protein sequence ID" value="ENSP00000355996.4"/>
    <property type="gene ID" value="ENSG00000123689.6"/>
</dbReference>
<dbReference type="GeneID" id="50486"/>
<dbReference type="KEGG" id="hsa:50486"/>
<dbReference type="MANE-Select" id="ENST00000367029.5">
    <property type="protein sequence ID" value="ENSP00000355996.4"/>
    <property type="RefSeq nucleotide sequence ID" value="NM_015714.4"/>
    <property type="RefSeq protein sequence ID" value="NP_056529.1"/>
</dbReference>
<dbReference type="UCSC" id="uc001hhi.5">
    <property type="organism name" value="human"/>
</dbReference>
<dbReference type="AGR" id="HGNC:30229"/>
<dbReference type="CTD" id="50486"/>
<dbReference type="DisGeNET" id="50486"/>
<dbReference type="GeneCards" id="G0S2"/>
<dbReference type="HGNC" id="HGNC:30229">
    <property type="gene designation" value="G0S2"/>
</dbReference>
<dbReference type="HPA" id="ENSG00000123689">
    <property type="expression patterns" value="Tissue enhanced (adipose tissue, bone marrow)"/>
</dbReference>
<dbReference type="MIM" id="614447">
    <property type="type" value="gene"/>
</dbReference>
<dbReference type="neXtProt" id="NX_P27469"/>
<dbReference type="OpenTargets" id="ENSG00000123689"/>
<dbReference type="PharmGKB" id="PA142671707"/>
<dbReference type="VEuPathDB" id="HostDB:ENSG00000123689"/>
<dbReference type="eggNOG" id="ENOG502S7WP">
    <property type="taxonomic scope" value="Eukaryota"/>
</dbReference>
<dbReference type="GeneTree" id="ENSGT00390000005294"/>
<dbReference type="HOGENOM" id="CLU_138623_0_0_1"/>
<dbReference type="InParanoid" id="P27469"/>
<dbReference type="OMA" id="CEQQSLH"/>
<dbReference type="OrthoDB" id="9373743at2759"/>
<dbReference type="PAN-GO" id="P27469">
    <property type="GO annotations" value="2 GO annotations based on evolutionary models"/>
</dbReference>
<dbReference type="PhylomeDB" id="P27469"/>
<dbReference type="TreeFam" id="TF336218"/>
<dbReference type="PathwayCommons" id="P27469"/>
<dbReference type="Reactome" id="R-HSA-1989781">
    <property type="pathway name" value="PPARA activates gene expression"/>
</dbReference>
<dbReference type="SignaLink" id="P27469"/>
<dbReference type="BioGRID-ORCS" id="50486">
    <property type="hits" value="4 hits in 1148 CRISPR screens"/>
</dbReference>
<dbReference type="ChiTaRS" id="G0S2">
    <property type="organism name" value="human"/>
</dbReference>
<dbReference type="GenomeRNAi" id="50486"/>
<dbReference type="Pharos" id="P27469">
    <property type="development level" value="Tbio"/>
</dbReference>
<dbReference type="PRO" id="PR:P27469"/>
<dbReference type="Proteomes" id="UP000005640">
    <property type="component" value="Chromosome 1"/>
</dbReference>
<dbReference type="RNAct" id="P27469">
    <property type="molecule type" value="protein"/>
</dbReference>
<dbReference type="Bgee" id="ENSG00000123689">
    <property type="expression patterns" value="Expressed in vena cava and 197 other cell types or tissues"/>
</dbReference>
<dbReference type="GO" id="GO:0005811">
    <property type="term" value="C:lipid droplet"/>
    <property type="evidence" value="ECO:0000304"/>
    <property type="project" value="Reactome"/>
</dbReference>
<dbReference type="GO" id="GO:0005739">
    <property type="term" value="C:mitochondrion"/>
    <property type="evidence" value="ECO:0000314"/>
    <property type="project" value="UniProtKB"/>
</dbReference>
<dbReference type="GO" id="GO:0097191">
    <property type="term" value="P:extrinsic apoptotic signaling pathway"/>
    <property type="evidence" value="ECO:0000314"/>
    <property type="project" value="UniProtKB"/>
</dbReference>
<dbReference type="GO" id="GO:0120162">
    <property type="term" value="P:positive regulation of cold-induced thermogenesis"/>
    <property type="evidence" value="ECO:0000250"/>
    <property type="project" value="YuBioLab"/>
</dbReference>
<dbReference type="GO" id="GO:2001238">
    <property type="term" value="P:positive regulation of extrinsic apoptotic signaling pathway"/>
    <property type="evidence" value="ECO:0000314"/>
    <property type="project" value="UniProtKB"/>
</dbReference>
<dbReference type="InterPro" id="IPR016821">
    <property type="entry name" value="G0S2"/>
</dbReference>
<dbReference type="PANTHER" id="PTHR15570">
    <property type="entry name" value="G0/G1 SWITCH PROTEIN 2"/>
    <property type="match status" value="1"/>
</dbReference>
<dbReference type="PANTHER" id="PTHR15570:SF2">
    <property type="entry name" value="G0_G1 SWITCH PROTEIN 2"/>
    <property type="match status" value="1"/>
</dbReference>
<dbReference type="Pfam" id="PF15103">
    <property type="entry name" value="G0-G1_switch_2"/>
    <property type="match status" value="1"/>
</dbReference>
<dbReference type="PIRSF" id="PIRSF023925">
    <property type="entry name" value="G0/G1_switch_p2"/>
    <property type="match status" value="1"/>
</dbReference>